<organism>
    <name type="scientific">Pelagibacter ubique (strain HTCC1062)</name>
    <dbReference type="NCBI Taxonomy" id="335992"/>
    <lineage>
        <taxon>Bacteria</taxon>
        <taxon>Pseudomonadati</taxon>
        <taxon>Pseudomonadota</taxon>
        <taxon>Alphaproteobacteria</taxon>
        <taxon>Candidatus Pelagibacterales</taxon>
        <taxon>Candidatus Pelagibacteraceae</taxon>
        <taxon>Candidatus Pelagibacter</taxon>
    </lineage>
</organism>
<sequence>MKFKPLHDRVLIEVLDSSEKTAGGIIIPDTAQEKPQEGKVIAVGGGAKTEDGKLIPMDVKVGDKVLFGKWSGTEIKIDGKEYSIMKESDIMGISGK</sequence>
<keyword id="KW-0143">Chaperone</keyword>
<keyword id="KW-0963">Cytoplasm</keyword>
<keyword id="KW-1185">Reference proteome</keyword>
<gene>
    <name evidence="1" type="primary">groES</name>
    <name evidence="1" type="synonym">groS</name>
    <name type="ordered locus">SAR11_0161</name>
</gene>
<protein>
    <recommendedName>
        <fullName evidence="1">Co-chaperonin GroES</fullName>
    </recommendedName>
    <alternativeName>
        <fullName evidence="1">10 kDa chaperonin</fullName>
    </alternativeName>
    <alternativeName>
        <fullName evidence="1">Chaperonin-10</fullName>
        <shortName evidence="1">Cpn10</shortName>
    </alternativeName>
</protein>
<accession>Q4FPA6</accession>
<name>CH10_PELUB</name>
<proteinExistence type="inferred from homology"/>
<comment type="function">
    <text evidence="1">Together with the chaperonin GroEL, plays an essential role in assisting protein folding. The GroEL-GroES system forms a nano-cage that allows encapsulation of the non-native substrate proteins and provides a physical environment optimized to promote and accelerate protein folding. GroES binds to the apical surface of the GroEL ring, thereby capping the opening of the GroEL channel.</text>
</comment>
<comment type="subunit">
    <text evidence="1">Heptamer of 7 subunits arranged in a ring. Interacts with the chaperonin GroEL.</text>
</comment>
<comment type="subcellular location">
    <subcellularLocation>
        <location evidence="1">Cytoplasm</location>
    </subcellularLocation>
</comment>
<comment type="similarity">
    <text evidence="1">Belongs to the GroES chaperonin family.</text>
</comment>
<dbReference type="EMBL" id="CP000084">
    <property type="protein sequence ID" value="AAZ20983.1"/>
    <property type="molecule type" value="Genomic_DNA"/>
</dbReference>
<dbReference type="RefSeq" id="WP_006997749.1">
    <property type="nucleotide sequence ID" value="NC_007205.1"/>
</dbReference>
<dbReference type="SMR" id="Q4FPA6"/>
<dbReference type="STRING" id="335992.SAR11_0161"/>
<dbReference type="GeneID" id="66294661"/>
<dbReference type="KEGG" id="pub:SAR11_0161"/>
<dbReference type="eggNOG" id="COG0234">
    <property type="taxonomic scope" value="Bacteria"/>
</dbReference>
<dbReference type="HOGENOM" id="CLU_132825_1_0_5"/>
<dbReference type="OrthoDB" id="9806791at2"/>
<dbReference type="Proteomes" id="UP000002528">
    <property type="component" value="Chromosome"/>
</dbReference>
<dbReference type="GO" id="GO:0005737">
    <property type="term" value="C:cytoplasm"/>
    <property type="evidence" value="ECO:0007669"/>
    <property type="project" value="UniProtKB-SubCell"/>
</dbReference>
<dbReference type="GO" id="GO:0005524">
    <property type="term" value="F:ATP binding"/>
    <property type="evidence" value="ECO:0007669"/>
    <property type="project" value="InterPro"/>
</dbReference>
<dbReference type="GO" id="GO:0046872">
    <property type="term" value="F:metal ion binding"/>
    <property type="evidence" value="ECO:0007669"/>
    <property type="project" value="TreeGrafter"/>
</dbReference>
<dbReference type="GO" id="GO:0044183">
    <property type="term" value="F:protein folding chaperone"/>
    <property type="evidence" value="ECO:0007669"/>
    <property type="project" value="InterPro"/>
</dbReference>
<dbReference type="GO" id="GO:0051087">
    <property type="term" value="F:protein-folding chaperone binding"/>
    <property type="evidence" value="ECO:0007669"/>
    <property type="project" value="TreeGrafter"/>
</dbReference>
<dbReference type="GO" id="GO:0051082">
    <property type="term" value="F:unfolded protein binding"/>
    <property type="evidence" value="ECO:0007669"/>
    <property type="project" value="TreeGrafter"/>
</dbReference>
<dbReference type="GO" id="GO:0051085">
    <property type="term" value="P:chaperone cofactor-dependent protein refolding"/>
    <property type="evidence" value="ECO:0007669"/>
    <property type="project" value="TreeGrafter"/>
</dbReference>
<dbReference type="CDD" id="cd00320">
    <property type="entry name" value="cpn10"/>
    <property type="match status" value="1"/>
</dbReference>
<dbReference type="FunFam" id="2.30.33.40:FF:000001">
    <property type="entry name" value="10 kDa chaperonin"/>
    <property type="match status" value="1"/>
</dbReference>
<dbReference type="Gene3D" id="2.30.33.40">
    <property type="entry name" value="GroES chaperonin"/>
    <property type="match status" value="1"/>
</dbReference>
<dbReference type="HAMAP" id="MF_00580">
    <property type="entry name" value="CH10"/>
    <property type="match status" value="1"/>
</dbReference>
<dbReference type="InterPro" id="IPR020818">
    <property type="entry name" value="Chaperonin_GroES"/>
</dbReference>
<dbReference type="InterPro" id="IPR037124">
    <property type="entry name" value="Chaperonin_GroES_sf"/>
</dbReference>
<dbReference type="InterPro" id="IPR018369">
    <property type="entry name" value="Chaprnonin_Cpn10_CS"/>
</dbReference>
<dbReference type="InterPro" id="IPR011032">
    <property type="entry name" value="GroES-like_sf"/>
</dbReference>
<dbReference type="NCBIfam" id="NF001527">
    <property type="entry name" value="PRK00364.1-2"/>
    <property type="match status" value="1"/>
</dbReference>
<dbReference type="NCBIfam" id="NF001529">
    <property type="entry name" value="PRK00364.1-5"/>
    <property type="match status" value="1"/>
</dbReference>
<dbReference type="NCBIfam" id="NF001531">
    <property type="entry name" value="PRK00364.2-2"/>
    <property type="match status" value="1"/>
</dbReference>
<dbReference type="NCBIfam" id="NF001533">
    <property type="entry name" value="PRK00364.2-4"/>
    <property type="match status" value="1"/>
</dbReference>
<dbReference type="NCBIfam" id="NF001534">
    <property type="entry name" value="PRK00364.2-5"/>
    <property type="match status" value="1"/>
</dbReference>
<dbReference type="PANTHER" id="PTHR10772">
    <property type="entry name" value="10 KDA HEAT SHOCK PROTEIN"/>
    <property type="match status" value="1"/>
</dbReference>
<dbReference type="PANTHER" id="PTHR10772:SF58">
    <property type="entry name" value="CO-CHAPERONIN GROES"/>
    <property type="match status" value="1"/>
</dbReference>
<dbReference type="Pfam" id="PF00166">
    <property type="entry name" value="Cpn10"/>
    <property type="match status" value="1"/>
</dbReference>
<dbReference type="PRINTS" id="PR00297">
    <property type="entry name" value="CHAPERONIN10"/>
</dbReference>
<dbReference type="SMART" id="SM00883">
    <property type="entry name" value="Cpn10"/>
    <property type="match status" value="1"/>
</dbReference>
<dbReference type="SUPFAM" id="SSF50129">
    <property type="entry name" value="GroES-like"/>
    <property type="match status" value="1"/>
</dbReference>
<dbReference type="PROSITE" id="PS00681">
    <property type="entry name" value="CHAPERONINS_CPN10"/>
    <property type="match status" value="1"/>
</dbReference>
<feature type="chain" id="PRO_1000025321" description="Co-chaperonin GroES">
    <location>
        <begin position="1"/>
        <end position="96"/>
    </location>
</feature>
<evidence type="ECO:0000255" key="1">
    <source>
        <dbReference type="HAMAP-Rule" id="MF_00580"/>
    </source>
</evidence>
<reference key="1">
    <citation type="journal article" date="2005" name="Science">
        <title>Genome streamlining in a cosmopolitan oceanic bacterium.</title>
        <authorList>
            <person name="Giovannoni S.J."/>
            <person name="Tripp H.J."/>
            <person name="Givan S."/>
            <person name="Podar M."/>
            <person name="Vergin K.L."/>
            <person name="Baptista D."/>
            <person name="Bibbs L."/>
            <person name="Eads J."/>
            <person name="Richardson T.H."/>
            <person name="Noordewier M."/>
            <person name="Rappe M.S."/>
            <person name="Short J.M."/>
            <person name="Carrington J.C."/>
            <person name="Mathur E.J."/>
        </authorList>
    </citation>
    <scope>NUCLEOTIDE SEQUENCE [LARGE SCALE GENOMIC DNA]</scope>
    <source>
        <strain>HTCC1062</strain>
    </source>
</reference>